<reference key="1">
    <citation type="journal article" date="2003" name="Proc. Natl. Acad. Sci. U.S.A.">
        <title>The complete genome sequence of the Arabidopsis and tomato pathogen Pseudomonas syringae pv. tomato DC3000.</title>
        <authorList>
            <person name="Buell C.R."/>
            <person name="Joardar V."/>
            <person name="Lindeberg M."/>
            <person name="Selengut J."/>
            <person name="Paulsen I.T."/>
            <person name="Gwinn M.L."/>
            <person name="Dodson R.J."/>
            <person name="DeBoy R.T."/>
            <person name="Durkin A.S."/>
            <person name="Kolonay J.F."/>
            <person name="Madupu R."/>
            <person name="Daugherty S.C."/>
            <person name="Brinkac L.M."/>
            <person name="Beanan M.J."/>
            <person name="Haft D.H."/>
            <person name="Nelson W.C."/>
            <person name="Davidsen T.M."/>
            <person name="Zafar N."/>
            <person name="Zhou L."/>
            <person name="Liu J."/>
            <person name="Yuan Q."/>
            <person name="Khouri H.M."/>
            <person name="Fedorova N.B."/>
            <person name="Tran B."/>
            <person name="Russell D."/>
            <person name="Berry K.J."/>
            <person name="Utterback T.R."/>
            <person name="Van Aken S.E."/>
            <person name="Feldblyum T.V."/>
            <person name="D'Ascenzo M."/>
            <person name="Deng W.-L."/>
            <person name="Ramos A.R."/>
            <person name="Alfano J.R."/>
            <person name="Cartinhour S."/>
            <person name="Chatterjee A.K."/>
            <person name="Delaney T.P."/>
            <person name="Lazarowitz S.G."/>
            <person name="Martin G.B."/>
            <person name="Schneider D.J."/>
            <person name="Tang X."/>
            <person name="Bender C.L."/>
            <person name="White O."/>
            <person name="Fraser C.M."/>
            <person name="Collmer A."/>
        </authorList>
    </citation>
    <scope>NUCLEOTIDE SEQUENCE [LARGE SCALE GENOMIC DNA]</scope>
    <source>
        <strain>ATCC BAA-871 / DC3000</strain>
    </source>
</reference>
<name>MDCB_PSESM</name>
<gene>
    <name evidence="1" type="primary">mdcB</name>
    <name type="ordered locus">PSPTO_5086</name>
</gene>
<keyword id="KW-0067">ATP-binding</keyword>
<keyword id="KW-0547">Nucleotide-binding</keyword>
<keyword id="KW-1185">Reference proteome</keyword>
<keyword id="KW-0808">Transferase</keyword>
<evidence type="ECO:0000255" key="1">
    <source>
        <dbReference type="HAMAP-Rule" id="MF_01883"/>
    </source>
</evidence>
<protein>
    <recommendedName>
        <fullName evidence="1">Probable 2-(5''-triphosphoribosyl)-3'-dephosphocoenzyme-A synthase</fullName>
        <shortName evidence="1">2-(5''-triphosphoribosyl)-3'-dephospho-CoA synthase</shortName>
        <ecNumber evidence="1">2.4.2.52</ecNumber>
    </recommendedName>
</protein>
<accession>Q87V55</accession>
<proteinExistence type="inferred from homology"/>
<organism>
    <name type="scientific">Pseudomonas syringae pv. tomato (strain ATCC BAA-871 / DC3000)</name>
    <dbReference type="NCBI Taxonomy" id="223283"/>
    <lineage>
        <taxon>Bacteria</taxon>
        <taxon>Pseudomonadati</taxon>
        <taxon>Pseudomonadota</taxon>
        <taxon>Gammaproteobacteria</taxon>
        <taxon>Pseudomonadales</taxon>
        <taxon>Pseudomonadaceae</taxon>
        <taxon>Pseudomonas</taxon>
    </lineage>
</organism>
<comment type="function">
    <text evidence="1">Involved in the formation of 2-(5''-phosphoribosyl)-3'-dephosphocoenzyme-A, the prosthetic group of the acyl-carrier protein of the malonate decarboxylase.</text>
</comment>
<comment type="catalytic activity">
    <reaction evidence="1">
        <text>3'-dephospho-CoA + ATP = 2'-(5''-triphospho-alpha-D-ribosyl)-3'-dephospho-CoA + adenine</text>
        <dbReference type="Rhea" id="RHEA:15117"/>
        <dbReference type="ChEBI" id="CHEBI:16708"/>
        <dbReference type="ChEBI" id="CHEBI:30616"/>
        <dbReference type="ChEBI" id="CHEBI:57328"/>
        <dbReference type="ChEBI" id="CHEBI:61378"/>
        <dbReference type="EC" id="2.4.2.52"/>
    </reaction>
</comment>
<comment type="similarity">
    <text evidence="1">Belongs to the CitG/MdcB family.</text>
</comment>
<feature type="chain" id="PRO_1000189591" description="Probable 2-(5''-triphosphoribosyl)-3'-dephosphocoenzyme-A synthase">
    <location>
        <begin position="1"/>
        <end position="291"/>
    </location>
</feature>
<sequence length="291" mass="30381">MSALQRTPQPASLAERLADLAVDALIDEADLSPKPALVDRCSNGAHTDLHLGLMHSSALSLWPTFKLMADAAAQFQAVGEPLREALGRLGREGEATMLRTTSGVNTHRGAIWALGLLVTAAALDPQDCGPDAVCQRAASLALIKDRQVLAQNSHGSEVVRRYGVMGAREQAQHGFPAVIRCALPQLQRSRAAGSGEQNARLDALLAIMTTLADTCVLHRAGLEGLQTMQNGAQRVLDAGGSASLAGRRALNQLDQQLLALNASPGGAADLLAACLFIDGLEPALGPVSRSA</sequence>
<dbReference type="EC" id="2.4.2.52" evidence="1"/>
<dbReference type="EMBL" id="AE016853">
    <property type="protein sequence ID" value="AAO58513.1"/>
    <property type="molecule type" value="Genomic_DNA"/>
</dbReference>
<dbReference type="RefSeq" id="NP_794818.1">
    <property type="nucleotide sequence ID" value="NC_004578.1"/>
</dbReference>
<dbReference type="RefSeq" id="WP_011105305.1">
    <property type="nucleotide sequence ID" value="NC_004578.1"/>
</dbReference>
<dbReference type="STRING" id="223283.PSPTO_5086"/>
<dbReference type="GeneID" id="1186771"/>
<dbReference type="KEGG" id="pst:PSPTO_5086"/>
<dbReference type="PATRIC" id="fig|223283.9.peg.5207"/>
<dbReference type="eggNOG" id="COG1767">
    <property type="taxonomic scope" value="Bacteria"/>
</dbReference>
<dbReference type="HOGENOM" id="CLU_056179_0_0_6"/>
<dbReference type="OrthoDB" id="114886at2"/>
<dbReference type="PhylomeDB" id="Q87V55"/>
<dbReference type="Proteomes" id="UP000002515">
    <property type="component" value="Chromosome"/>
</dbReference>
<dbReference type="GO" id="GO:0005524">
    <property type="term" value="F:ATP binding"/>
    <property type="evidence" value="ECO:0007669"/>
    <property type="project" value="UniProtKB-KW"/>
</dbReference>
<dbReference type="GO" id="GO:0046917">
    <property type="term" value="F:triphosphoribosyl-dephospho-CoA synthase activity"/>
    <property type="evidence" value="ECO:0007669"/>
    <property type="project" value="UniProtKB-UniRule"/>
</dbReference>
<dbReference type="GO" id="GO:0051191">
    <property type="term" value="P:prosthetic group biosynthetic process"/>
    <property type="evidence" value="ECO:0007669"/>
    <property type="project" value="TreeGrafter"/>
</dbReference>
<dbReference type="Gene3D" id="1.10.4200.10">
    <property type="entry name" value="Triphosphoribosyl-dephospho-CoA protein"/>
    <property type="match status" value="2"/>
</dbReference>
<dbReference type="HAMAP" id="MF_01883">
    <property type="entry name" value="MdcB"/>
    <property type="match status" value="1"/>
</dbReference>
<dbReference type="InterPro" id="IPR002736">
    <property type="entry name" value="CitG"/>
</dbReference>
<dbReference type="InterPro" id="IPR017555">
    <property type="entry name" value="TriPribosyl-deP-CoA_syn"/>
</dbReference>
<dbReference type="NCBIfam" id="TIGR03132">
    <property type="entry name" value="malonate_mdcB"/>
    <property type="match status" value="1"/>
</dbReference>
<dbReference type="NCBIfam" id="NF002315">
    <property type="entry name" value="PRK01237.1"/>
    <property type="match status" value="1"/>
</dbReference>
<dbReference type="PANTHER" id="PTHR30201:SF2">
    <property type="entry name" value="2-(5''-TRIPHOSPHORIBOSYL)-3'-DEPHOSPHOCOENZYME-A SYNTHASE"/>
    <property type="match status" value="1"/>
</dbReference>
<dbReference type="PANTHER" id="PTHR30201">
    <property type="entry name" value="TRIPHOSPHORIBOSYL-DEPHOSPHO-COA SYNTHASE"/>
    <property type="match status" value="1"/>
</dbReference>
<dbReference type="Pfam" id="PF01874">
    <property type="entry name" value="CitG"/>
    <property type="match status" value="1"/>
</dbReference>